<reference key="1">
    <citation type="journal article" date="1998" name="FEBS Lett.">
        <title>HAP1-huntingtin interactions do not contribute to the molecular pathology in Huntingtons disease transgenic mice.</title>
        <authorList>
            <person name="Bertaux F."/>
            <person name="Sharp A.H."/>
            <person name="Ross C.A."/>
            <person name="Lehrach H."/>
            <person name="Bates G.P."/>
            <person name="Wanker E."/>
        </authorList>
    </citation>
    <scope>NUCLEOTIDE SEQUENCE [MRNA] (ISOFORMS A AND B)</scope>
    <source>
        <strain>BALB/cJ</strain>
        <tissue>Brain</tissue>
    </source>
</reference>
<reference key="2">
    <citation type="journal article" date="1998" name="Mamm. Genome">
        <title>Gene structure and map location of the murine homolog of the Huntington-associated protein, Hap1.</title>
        <authorList>
            <person name="Nasir J."/>
            <person name="Duan K."/>
            <person name="Nichol K."/>
            <person name="Engelender S."/>
            <person name="Ashworth R."/>
            <person name="Colomer V."/>
            <person name="Thomas S."/>
            <person name="Disteche C.M."/>
            <person name="Hayden M.R."/>
            <person name="Ross C.A."/>
        </authorList>
    </citation>
    <scope>NUCLEOTIDE SEQUENCE [GENOMIC DNA] (ISOFORM A)</scope>
    <source>
        <strain>129/SvJ</strain>
    </source>
</reference>
<reference key="3">
    <citation type="journal article" date="2004" name="Genome Res.">
        <title>The status, quality, and expansion of the NIH full-length cDNA project: the Mammalian Gene Collection (MGC).</title>
        <authorList>
            <consortium name="The MGC Project Team"/>
        </authorList>
    </citation>
    <scope>NUCLEOTIDE SEQUENCE [LARGE SCALE MRNA] (ISOFORM B)</scope>
    <source>
        <strain>C57BL/6J</strain>
        <tissue>Brain</tissue>
        <tissue>Eye</tissue>
    </source>
</reference>
<reference key="4">
    <citation type="journal article" date="2003" name="J. Neurosci.">
        <title>Lack of huntingtin-associated protein-1 causes neuronal death resembling hypothalamic degeneration in Huntington's disease.</title>
        <authorList>
            <person name="Li S.H."/>
            <person name="Yu Z.X."/>
            <person name="Li C.L."/>
            <person name="Nguyen H.P."/>
            <person name="Zhou Y.X."/>
            <person name="Deng C."/>
            <person name="Li X.J."/>
        </authorList>
    </citation>
    <scope>FUNCTION</scope>
    <scope>DISRUPTION PHENOTYPE</scope>
</reference>
<reference key="5">
    <citation type="journal article" date="2004" name="Eur. J. Neurosci.">
        <title>HAP1 facilitates effects of mutant huntingtin on inositol 1,4,5-trisphosphate-induced Ca release in primary culture of striatal medium spiny neurons.</title>
        <authorList>
            <person name="Tang T.S."/>
            <person name="Tu H."/>
            <person name="Orban P.C."/>
            <person name="Chan E.Y."/>
            <person name="Hayden M.R."/>
            <person name="Bezprozvanny I."/>
        </authorList>
    </citation>
    <scope>FUNCTION</scope>
</reference>
<reference key="6">
    <citation type="journal article" date="2007" name="BMC Mol. Biol.">
        <title>HAP1 can sequester a subset of TBP in cytoplasmic inclusions via specific interaction with the conserved TBP(CORE).</title>
        <authorList>
            <person name="Prigge J.R."/>
            <person name="Schmidt E.E."/>
        </authorList>
    </citation>
    <scope>FUNCTION</scope>
    <scope>INTERACTION WITH TBP</scope>
</reference>
<reference key="7">
    <citation type="journal article" date="2008" name="J. Clin. Invest.">
        <title>Huntingtin-associated protein 1 interacts with Ahi1 to regulate cerebellar and brainstem development in mice.</title>
        <authorList>
            <person name="Sheng G."/>
            <person name="Xu X."/>
            <person name="Lin Y.F."/>
            <person name="Wang C.E."/>
            <person name="Rong J."/>
            <person name="Cheng D."/>
            <person name="Peng J."/>
            <person name="Jiang X."/>
            <person name="Li S.H."/>
            <person name="Li X.J."/>
        </authorList>
    </citation>
    <scope>FUNCTION</scope>
    <scope>INTERACTION WITH AHI1</scope>
</reference>
<reference key="8">
    <citation type="journal article" date="2011" name="J. Clin. Invest.">
        <title>Ciliogenesis is regulated by a huntingtin-HAP1-PCM1 pathway and is altered in Huntington disease.</title>
        <authorList>
            <person name="Keryer G."/>
            <person name="Pineda J.R."/>
            <person name="Liot G."/>
            <person name="Kim J."/>
            <person name="Dietrich P."/>
            <person name="Benstaali C."/>
            <person name="Smith K."/>
            <person name="Cordelieres F.P."/>
            <person name="Spassky N."/>
            <person name="Ferrante R.J."/>
            <person name="Dragatsis I."/>
            <person name="Saudou F."/>
        </authorList>
    </citation>
    <scope>FUNCTION</scope>
</reference>
<reference key="9">
    <citation type="journal article" date="2013" name="J. Biol. Chem.">
        <title>The Joubert syndrome-associated missense mutation (V443D) in the Abelson-helper integration site 1 (AHI1) protein alters its localization and protein-protein interactions.</title>
        <authorList>
            <person name="Tuz K."/>
            <person name="Hsiao Y.C."/>
            <person name="Juarez O."/>
            <person name="Shi B."/>
            <person name="Harmon E.Y."/>
            <person name="Phelps I.G."/>
            <person name="Lennartz M.R."/>
            <person name="Glass I.A."/>
            <person name="Doherty D."/>
            <person name="Ferland R.J."/>
        </authorList>
    </citation>
    <scope>INTERACTION WITH AHI1</scope>
</reference>
<reference key="10">
    <citation type="journal article" date="2013" name="J. Neurosci.">
        <title>Loss of Ahi1 affects early development by impairing BM88/Cend1-mediated neuronal differentiation.</title>
        <authorList>
            <person name="Weng L."/>
            <person name="Lin Y.F."/>
            <person name="Li A.L."/>
            <person name="Wang C.E."/>
            <person name="Yan S."/>
            <person name="Sun M."/>
            <person name="Gaertig M.A."/>
            <person name="Mitha N."/>
            <person name="Kosaka J."/>
            <person name="Wakabayashi T."/>
            <person name="Xu X."/>
            <person name="Tang B."/>
            <person name="Li S."/>
            <person name="Li X.J."/>
        </authorList>
    </citation>
    <scope>INTERACTION WITH AHI1</scope>
</reference>
<reference key="11">
    <citation type="journal article" date="2014" name="J. Clin. Invest.">
        <title>Huntingtin-associated protein 1 regulates postnatal neurogenesis and neurotrophin receptor sorting.</title>
        <authorList>
            <person name="Xiang J."/>
            <person name="Yang H."/>
            <person name="Zhao T."/>
            <person name="Sun M."/>
            <person name="Xu X."/>
            <person name="Zhou X.F."/>
            <person name="Li S.H."/>
            <person name="Li X.J."/>
        </authorList>
    </citation>
    <scope>FUNCTION</scope>
</reference>
<reference key="12">
    <citation type="journal article" date="2014" name="J. Neurosci.">
        <title>The regulation of autophagosome dynamics by huntingtin and HAP1 is disrupted by expression of mutant huntingtin, leading to defective cargo degradation.</title>
        <authorList>
            <person name="Wong Y.C."/>
            <person name="Holzbaur E.L."/>
        </authorList>
    </citation>
    <scope>FUNCTION</scope>
    <scope>SUBCELLULAR LOCATION</scope>
</reference>
<reference key="13">
    <citation type="journal article" date="2014" name="J. Physiol. (Lond.)">
        <title>Huntingtin-associated protein 1 regulates exocytosis, vesicle docking, readily releasable pool size and fusion pore stability in mouse chromaffin cells.</title>
        <authorList>
            <person name="Mackenzie K.D."/>
            <person name="Duffield M.D."/>
            <person name="Peiris H."/>
            <person name="Phillips L."/>
            <person name="Zanin M.P."/>
            <person name="Teo E.H."/>
            <person name="Zhou X.F."/>
            <person name="Keating D.J."/>
        </authorList>
    </citation>
    <scope>FUNCTION</scope>
</reference>
<protein>
    <recommendedName>
        <fullName>Huntingtin-associated protein 1</fullName>
        <shortName>HAP-1</shortName>
    </recommendedName>
</protein>
<feature type="chain" id="PRO_0000083895" description="Huntingtin-associated protein 1">
    <location>
        <begin position="1"/>
        <end position="628"/>
    </location>
</feature>
<feature type="domain" description="HAP1 N-terminal">
    <location>
        <begin position="79"/>
        <end position="403"/>
    </location>
</feature>
<feature type="region of interest" description="Disordered" evidence="5">
    <location>
        <begin position="1"/>
        <end position="62"/>
    </location>
</feature>
<feature type="region of interest" description="Sufficient for interaction with KIF5B" evidence="1">
    <location>
        <begin position="152"/>
        <end position="319"/>
    </location>
</feature>
<feature type="region of interest" description="Interaction with TBP" evidence="8">
    <location>
        <begin position="157"/>
        <end position="261"/>
    </location>
</feature>
<feature type="region of interest" description="Disordered" evidence="5">
    <location>
        <begin position="212"/>
        <end position="264"/>
    </location>
</feature>
<feature type="region of interest" description="Sufficient for self-association and interaction with HD" evidence="1">
    <location>
        <begin position="276"/>
        <end position="444"/>
    </location>
</feature>
<feature type="region of interest" description="Disordered" evidence="5">
    <location>
        <begin position="372"/>
        <end position="411"/>
    </location>
</feature>
<feature type="region of interest" description="Disordered" evidence="5">
    <location>
        <begin position="451"/>
        <end position="529"/>
    </location>
</feature>
<feature type="region of interest" description="Interaction with TBP" evidence="8">
    <location>
        <begin position="473"/>
        <end position="582"/>
    </location>
</feature>
<feature type="region of interest" description="Disordered" evidence="5">
    <location>
        <begin position="562"/>
        <end position="628"/>
    </location>
</feature>
<feature type="coiled-coil region" evidence="4">
    <location>
        <begin position="168"/>
        <end position="301"/>
    </location>
</feature>
<feature type="coiled-coil region" evidence="4">
    <location>
        <begin position="327"/>
        <end position="367"/>
    </location>
</feature>
<feature type="compositionally biased region" description="Pro residues" evidence="5">
    <location>
        <begin position="32"/>
        <end position="44"/>
    </location>
</feature>
<feature type="compositionally biased region" description="Polar residues" evidence="5">
    <location>
        <begin position="52"/>
        <end position="62"/>
    </location>
</feature>
<feature type="compositionally biased region" description="Acidic residues" evidence="5">
    <location>
        <begin position="214"/>
        <end position="235"/>
    </location>
</feature>
<feature type="compositionally biased region" description="Basic and acidic residues" evidence="5">
    <location>
        <begin position="236"/>
        <end position="248"/>
    </location>
</feature>
<feature type="compositionally biased region" description="Basic and acidic residues" evidence="5">
    <location>
        <begin position="387"/>
        <end position="398"/>
    </location>
</feature>
<feature type="compositionally biased region" description="Basic and acidic residues" evidence="5">
    <location>
        <begin position="451"/>
        <end position="464"/>
    </location>
</feature>
<feature type="compositionally biased region" description="Acidic residues" evidence="5">
    <location>
        <begin position="479"/>
        <end position="494"/>
    </location>
</feature>
<feature type="compositionally biased region" description="Acidic residues" evidence="5">
    <location>
        <begin position="504"/>
        <end position="527"/>
    </location>
</feature>
<feature type="compositionally biased region" description="Basic and acidic residues" evidence="5">
    <location>
        <begin position="605"/>
        <end position="622"/>
    </location>
</feature>
<feature type="splice variant" id="VSP_004279" description="In isoform A." evidence="16">
    <original>DSPTPQQQTNMGGGILEQQPRVPTQDSQRLEEDRATHSPSAREEEGPSGAT</original>
    <variation>GECSRRGHPPASGTSFRSSTI</variation>
    <location>
        <begin position="578"/>
        <end position="628"/>
    </location>
</feature>
<feature type="modified residue" description="Phosphothreonine" evidence="2">
    <location sequence="O35668-2">
        <position position="598"/>
    </location>
</feature>
<dbReference type="EMBL" id="AJ000262">
    <property type="protein sequence ID" value="CAA03978.1"/>
    <property type="molecule type" value="mRNA"/>
</dbReference>
<dbReference type="EMBL" id="AJ002271">
    <property type="protein sequence ID" value="CAA05286.1"/>
    <property type="molecule type" value="mRNA"/>
</dbReference>
<dbReference type="EMBL" id="AJ003128">
    <property type="protein sequence ID" value="CAA05883.1"/>
    <property type="molecule type" value="Genomic_DNA"/>
</dbReference>
<dbReference type="EMBL" id="BC034089">
    <property type="protein sequence ID" value="AAH34089.1"/>
    <property type="molecule type" value="mRNA"/>
</dbReference>
<dbReference type="EMBL" id="BC053043">
    <property type="protein sequence ID" value="AAH53043.1"/>
    <property type="molecule type" value="mRNA"/>
</dbReference>
<dbReference type="CCDS" id="CCDS25419.1">
    <molecule id="O35668-2"/>
</dbReference>
<dbReference type="CCDS" id="CCDS56806.1">
    <molecule id="O35668-1"/>
</dbReference>
<dbReference type="RefSeq" id="NP_034534.1">
    <molecule id="O35668-2"/>
    <property type="nucleotide sequence ID" value="NM_010404.3"/>
</dbReference>
<dbReference type="RefSeq" id="NP_817090.1">
    <molecule id="O35668-1"/>
    <property type="nucleotide sequence ID" value="NM_177981.2"/>
</dbReference>
<dbReference type="RefSeq" id="XP_030101441.1">
    <molecule id="O35668-1"/>
    <property type="nucleotide sequence ID" value="XM_030245581.1"/>
</dbReference>
<dbReference type="SMR" id="O35668"/>
<dbReference type="BioGRID" id="200207">
    <property type="interactions" value="5"/>
</dbReference>
<dbReference type="CORUM" id="O35668"/>
<dbReference type="DIP" id="DIP-32510N"/>
<dbReference type="FunCoup" id="O35668">
    <property type="interactions" value="84"/>
</dbReference>
<dbReference type="IntAct" id="O35668">
    <property type="interactions" value="18"/>
</dbReference>
<dbReference type="MINT" id="O35668"/>
<dbReference type="STRING" id="10090.ENSMUSP00000133356"/>
<dbReference type="iPTMnet" id="O35668"/>
<dbReference type="PhosphoSitePlus" id="O35668"/>
<dbReference type="PaxDb" id="10090-ENSMUSP00000099413"/>
<dbReference type="ProteomicsDB" id="269713">
    <molecule id="O35668-1"/>
</dbReference>
<dbReference type="ProteomicsDB" id="269714">
    <molecule id="O35668-2"/>
</dbReference>
<dbReference type="Antibodypedia" id="80380">
    <property type="antibodies" value="246 antibodies from 34 providers"/>
</dbReference>
<dbReference type="DNASU" id="15114"/>
<dbReference type="Ensembl" id="ENSMUST00000103124.11">
    <molecule id="O35668-2"/>
    <property type="protein sequence ID" value="ENSMUSP00000099413.5"/>
    <property type="gene ID" value="ENSMUSG00000006930.16"/>
</dbReference>
<dbReference type="Ensembl" id="ENSMUST00000138603.9">
    <molecule id="O35668-1"/>
    <property type="protein sequence ID" value="ENSMUSP00000133356.2"/>
    <property type="gene ID" value="ENSMUSG00000006930.16"/>
</dbReference>
<dbReference type="GeneID" id="15114"/>
<dbReference type="KEGG" id="mmu:15114"/>
<dbReference type="UCSC" id="uc007lkx.2">
    <molecule id="O35668-2"/>
    <property type="organism name" value="mouse"/>
</dbReference>
<dbReference type="UCSC" id="uc007lky.2">
    <molecule id="O35668-1"/>
    <property type="organism name" value="mouse"/>
</dbReference>
<dbReference type="AGR" id="MGI:1261831"/>
<dbReference type="CTD" id="9001"/>
<dbReference type="MGI" id="MGI:1261831">
    <property type="gene designation" value="Hap1"/>
</dbReference>
<dbReference type="VEuPathDB" id="HostDB:ENSMUSG00000006930"/>
<dbReference type="eggNOG" id="KOG4360">
    <property type="taxonomic scope" value="Eukaryota"/>
</dbReference>
<dbReference type="GeneTree" id="ENSGT00940000162183"/>
<dbReference type="HOGENOM" id="CLU_036493_0_0_1"/>
<dbReference type="InParanoid" id="O35668"/>
<dbReference type="OMA" id="RNYEVTP"/>
<dbReference type="OrthoDB" id="10067624at2759"/>
<dbReference type="PhylomeDB" id="O35668"/>
<dbReference type="TreeFam" id="TF323495"/>
<dbReference type="BioGRID-ORCS" id="15114">
    <property type="hits" value="4 hits in 77 CRISPR screens"/>
</dbReference>
<dbReference type="ChiTaRS" id="Hap1">
    <property type="organism name" value="mouse"/>
</dbReference>
<dbReference type="PRO" id="PR:O35668"/>
<dbReference type="Proteomes" id="UP000000589">
    <property type="component" value="Chromosome 11"/>
</dbReference>
<dbReference type="RNAct" id="O35668">
    <property type="molecule type" value="protein"/>
</dbReference>
<dbReference type="Bgee" id="ENSMUSG00000006930">
    <property type="expression patterns" value="Expressed in dorsomedial nucleus of hypothalamus and 189 other cell types or tissues"/>
</dbReference>
<dbReference type="ExpressionAtlas" id="O35668">
    <property type="expression patterns" value="baseline and differential"/>
</dbReference>
<dbReference type="GO" id="GO:0005776">
    <property type="term" value="C:autophagosome"/>
    <property type="evidence" value="ECO:0000314"/>
    <property type="project" value="UniProtKB"/>
</dbReference>
<dbReference type="GO" id="GO:1904115">
    <property type="term" value="C:axon cytoplasm"/>
    <property type="evidence" value="ECO:0007669"/>
    <property type="project" value="GOC"/>
</dbReference>
<dbReference type="GO" id="GO:0005814">
    <property type="term" value="C:centriole"/>
    <property type="evidence" value="ECO:0000314"/>
    <property type="project" value="MGI"/>
</dbReference>
<dbReference type="GO" id="GO:0005813">
    <property type="term" value="C:centrosome"/>
    <property type="evidence" value="ECO:0000314"/>
    <property type="project" value="CACAO"/>
</dbReference>
<dbReference type="GO" id="GO:0031410">
    <property type="term" value="C:cytoplasmic vesicle"/>
    <property type="evidence" value="ECO:0000314"/>
    <property type="project" value="MGI"/>
</dbReference>
<dbReference type="GO" id="GO:0005829">
    <property type="term" value="C:cytosol"/>
    <property type="evidence" value="ECO:0007669"/>
    <property type="project" value="Ensembl"/>
</dbReference>
<dbReference type="GO" id="GO:0043197">
    <property type="term" value="C:dendritic spine"/>
    <property type="evidence" value="ECO:0007669"/>
    <property type="project" value="UniProtKB-SubCell"/>
</dbReference>
<dbReference type="GO" id="GO:0005769">
    <property type="term" value="C:early endosome"/>
    <property type="evidence" value="ECO:0007669"/>
    <property type="project" value="UniProtKB-SubCell"/>
</dbReference>
<dbReference type="GO" id="GO:0005783">
    <property type="term" value="C:endoplasmic reticulum"/>
    <property type="evidence" value="ECO:0007669"/>
    <property type="project" value="UniProtKB-SubCell"/>
</dbReference>
<dbReference type="GO" id="GO:0030426">
    <property type="term" value="C:growth cone"/>
    <property type="evidence" value="ECO:0007669"/>
    <property type="project" value="UniProtKB-SubCell"/>
</dbReference>
<dbReference type="GO" id="GO:0016234">
    <property type="term" value="C:inclusion body"/>
    <property type="evidence" value="ECO:0007669"/>
    <property type="project" value="Ensembl"/>
</dbReference>
<dbReference type="GO" id="GO:0005764">
    <property type="term" value="C:lysosome"/>
    <property type="evidence" value="ECO:0007669"/>
    <property type="project" value="UniProtKB-SubCell"/>
</dbReference>
<dbReference type="GO" id="GO:0005739">
    <property type="term" value="C:mitochondrion"/>
    <property type="evidence" value="ECO:0007669"/>
    <property type="project" value="UniProtKB-SubCell"/>
</dbReference>
<dbReference type="GO" id="GO:0005730">
    <property type="term" value="C:nucleolus"/>
    <property type="evidence" value="ECO:0007669"/>
    <property type="project" value="Ensembl"/>
</dbReference>
<dbReference type="GO" id="GO:0008021">
    <property type="term" value="C:synaptic vesicle"/>
    <property type="evidence" value="ECO:0007669"/>
    <property type="project" value="UniProtKB-SubCell"/>
</dbReference>
<dbReference type="GO" id="GO:0048403">
    <property type="term" value="F:brain-derived neurotrophic factor binding"/>
    <property type="evidence" value="ECO:0000250"/>
    <property type="project" value="UniProtKB"/>
</dbReference>
<dbReference type="GO" id="GO:0044325">
    <property type="term" value="F:transmembrane transporter binding"/>
    <property type="evidence" value="ECO:0000250"/>
    <property type="project" value="UniProtKB"/>
</dbReference>
<dbReference type="GO" id="GO:0008089">
    <property type="term" value="P:anterograde axonal transport"/>
    <property type="evidence" value="ECO:0000315"/>
    <property type="project" value="UniProtKB"/>
</dbReference>
<dbReference type="GO" id="GO:0006914">
    <property type="term" value="P:autophagy"/>
    <property type="evidence" value="ECO:0007669"/>
    <property type="project" value="UniProtKB-KW"/>
</dbReference>
<dbReference type="GO" id="GO:0030030">
    <property type="term" value="P:cell projection organization"/>
    <property type="evidence" value="ECO:0007669"/>
    <property type="project" value="UniProtKB-KW"/>
</dbReference>
<dbReference type="GO" id="GO:0021549">
    <property type="term" value="P:cerebellum development"/>
    <property type="evidence" value="ECO:0000315"/>
    <property type="project" value="UniProtKB"/>
</dbReference>
<dbReference type="GO" id="GO:0006887">
    <property type="term" value="P:exocytosis"/>
    <property type="evidence" value="ECO:0007669"/>
    <property type="project" value="UniProtKB-KW"/>
</dbReference>
<dbReference type="GO" id="GO:0021979">
    <property type="term" value="P:hypothalamus cell differentiation"/>
    <property type="evidence" value="ECO:0000315"/>
    <property type="project" value="UniProtKB"/>
</dbReference>
<dbReference type="GO" id="GO:1902430">
    <property type="term" value="P:negative regulation of amyloid-beta formation"/>
    <property type="evidence" value="ECO:0000250"/>
    <property type="project" value="UniProtKB"/>
</dbReference>
<dbReference type="GO" id="GO:0022008">
    <property type="term" value="P:neurogenesis"/>
    <property type="evidence" value="ECO:0000315"/>
    <property type="project" value="CACAO"/>
</dbReference>
<dbReference type="GO" id="GO:0048011">
    <property type="term" value="P:neurotrophin TRK receptor signaling pathway"/>
    <property type="evidence" value="ECO:0000315"/>
    <property type="project" value="UniProtKB"/>
</dbReference>
<dbReference type="GO" id="GO:0045742">
    <property type="term" value="P:positive regulation of epidermal growth factor receptor signaling pathway"/>
    <property type="evidence" value="ECO:0000250"/>
    <property type="project" value="UniProtKB"/>
</dbReference>
<dbReference type="GO" id="GO:0031587">
    <property type="term" value="P:positive regulation of inositol 1,4,5-trisphosphate-sensitive calcium-release channel activity"/>
    <property type="evidence" value="ECO:0000315"/>
    <property type="project" value="UniProtKB"/>
</dbReference>
<dbReference type="GO" id="GO:0050769">
    <property type="term" value="P:positive regulation of neurogenesis"/>
    <property type="evidence" value="ECO:0000315"/>
    <property type="project" value="UniProtKB"/>
</dbReference>
<dbReference type="GO" id="GO:0032901">
    <property type="term" value="P:positive regulation of neurotrophin production"/>
    <property type="evidence" value="ECO:0000250"/>
    <property type="project" value="UniProtKB"/>
</dbReference>
<dbReference type="GO" id="GO:1902857">
    <property type="term" value="P:positive regulation of non-motile cilium assembly"/>
    <property type="evidence" value="ECO:0000315"/>
    <property type="project" value="UniProtKB"/>
</dbReference>
<dbReference type="GO" id="GO:0032230">
    <property type="term" value="P:positive regulation of synaptic transmission, GABAergic"/>
    <property type="evidence" value="ECO:0000250"/>
    <property type="project" value="UniProtKB"/>
</dbReference>
<dbReference type="GO" id="GO:0015031">
    <property type="term" value="P:protein transport"/>
    <property type="evidence" value="ECO:0007669"/>
    <property type="project" value="UniProtKB-KW"/>
</dbReference>
<dbReference type="GO" id="GO:0017157">
    <property type="term" value="P:regulation of exocytosis"/>
    <property type="evidence" value="ECO:0000315"/>
    <property type="project" value="UniProtKB"/>
</dbReference>
<dbReference type="GO" id="GO:1902513">
    <property type="term" value="P:regulation of organelle transport along microtubule"/>
    <property type="evidence" value="ECO:0000315"/>
    <property type="project" value="UniProtKB"/>
</dbReference>
<dbReference type="GO" id="GO:0008090">
    <property type="term" value="P:retrograde axonal transport"/>
    <property type="evidence" value="ECO:0000250"/>
    <property type="project" value="UniProtKB"/>
</dbReference>
<dbReference type="GO" id="GO:0047496">
    <property type="term" value="P:vesicle transport along microtubule"/>
    <property type="evidence" value="ECO:0000315"/>
    <property type="project" value="MGI"/>
</dbReference>
<dbReference type="InterPro" id="IPR006933">
    <property type="entry name" value="HAP1_N"/>
</dbReference>
<dbReference type="InterPro" id="IPR051946">
    <property type="entry name" value="Intracell_Traff-Reg"/>
</dbReference>
<dbReference type="PANTHER" id="PTHR15751:SF14">
    <property type="entry name" value="HUNTINGTIN-ASSOCIATED PROTEIN 1"/>
    <property type="match status" value="1"/>
</dbReference>
<dbReference type="PANTHER" id="PTHR15751">
    <property type="entry name" value="TRAFFICKING KINESIN-BINDING PROTEIN"/>
    <property type="match status" value="1"/>
</dbReference>
<dbReference type="Pfam" id="PF04849">
    <property type="entry name" value="HAP1_N"/>
    <property type="match status" value="1"/>
</dbReference>
<dbReference type="SMART" id="SM01424">
    <property type="entry name" value="HAP1_N"/>
    <property type="match status" value="1"/>
</dbReference>
<keyword id="KW-0025">Alternative splicing</keyword>
<keyword id="KW-0072">Autophagy</keyword>
<keyword id="KW-0966">Cell projection</keyword>
<keyword id="KW-0970">Cilium biogenesis/degradation</keyword>
<keyword id="KW-0175">Coiled coil</keyword>
<keyword id="KW-0963">Cytoplasm</keyword>
<keyword id="KW-0968">Cytoplasmic vesicle</keyword>
<keyword id="KW-0206">Cytoskeleton</keyword>
<keyword id="KW-0256">Endoplasmic reticulum</keyword>
<keyword id="KW-0967">Endosome</keyword>
<keyword id="KW-0268">Exocytosis</keyword>
<keyword id="KW-0458">Lysosome</keyword>
<keyword id="KW-0496">Mitochondrion</keyword>
<keyword id="KW-0539">Nucleus</keyword>
<keyword id="KW-0597">Phosphoprotein</keyword>
<keyword id="KW-0653">Protein transport</keyword>
<keyword id="KW-1185">Reference proteome</keyword>
<keyword id="KW-0770">Synapse</keyword>
<keyword id="KW-0813">Transport</keyword>
<proteinExistence type="evidence at protein level"/>
<sequence length="628" mass="70116">MRPKEQVQSGAGDGTGSGDPAAGTPTTQPAVGPAPEPSAEPKPAPAQGTGSGQKSGSRTKTGSFCRSMIIGDSDAPWTRYVFQGPYGPRATGLGTGKAEGIWKTPAAYIGRRPGVSGPERAAFIRELQEALCPNPPPTKKITEDDVKVMLYLLEEKERDLNTAARIGQSLVKQNSVLMEENNKLETMLGSAREEILHLRKQVNLRDDLLQLYSDSDDDDDEEDEEDEEEGEEEEREGQRDQDQQHDHPYGAPKPHPKAETAHRCPQLETLQQKLRLLEEENDHLREEASHLDNLEDEEQMLILECVEQFSEASQQMAELSEVLVLRLEGYERQQKEITQLQAEITKLQQRCQSYGAQTEKLQQMLASEKGIHSESLRAGSYMQDYGSRPRDRQEDGKSHRQRSSMPAGSVTHYGYSVPLDALPSFPETLAEELRTSLRKFITDPAYFMERRDTHCREGRKKEQRAMPPPPAQDLKPPEDFEAPEELVPEEELGAIEEVGTAEDGQAEENEQASEETEAWEEVEPEVDETTRMNVVVSALEASGLGPSHLDMKYVLQQLSNWQDAHSKRQQKQKVVPKDSPTPQQQTNMGGGILEQQPRVPTQDSQRLEEDRATHSPSAREEEGPSGAT</sequence>
<comment type="function">
    <text evidence="6 7 8 9 10 13 14 15">Originally identified as neuronal protein that specifically associates with HTT/huntingtin and the binding is enhanced by an expanded polyglutamine repeat within HTT possibly affecting HAP1 interaction properties. Both HTT and HAP1 are involved in intracellular trafficking and HAP1 is proposed to link HTT to motor proteins and/or transport cargos. Seems to play a role in vesicular transport within neurons and axons such as from early endosomes to late endocytic compartments and to promote neurite outgrowth. The vesicular transport function via association with microtubule-dependent transporters can be attenuated by association with mutant HTT. Involved in the axonal transport of BDNF and its activity-dependent secretion; the function seems to involve HTT, DCTN1 and a complex with SORT1. Involved in APP trafficking and seems to facilitate APP anterograde transport and membrane insertion thereby possibly reducing processing into amyloid beta. Involved in delivery of gamma-aminobutyric acid (GABA(A)) receptors to synapses; the function is dependent on kinesin motor protein KIF5 and is disrupted by HTT with expanded polyglutamine repeat. Involved in regulation of autophagosome motility by promoting efficient retrograde axonal transport. Seems to be involved in regulation of membrane receptor recycling and degradation, and respective signal transduction, including GABA(A) receptors, tyrosine kinase receptors, EGFR, IP3 receptor and androgen receptor. Among others suggested to be involved in control of feeding behavior (involving hypothalamic GABA(A) receptors), cerebellar and brainstem development (involving AHI1 and NTRK1/TrkA), postnatal neurogenesis (involving hypothalamic NTRK2/TrkB regulating the number of Npyr1-expressing cells), and ITPR1/InsP3R1-mediated Ca(2+) release (involving HTT and possibly the effect of mutant HTT). Via association with DCTN1/dynactin p150-glued and HTT/huntingtin involved in cytoplasmic retention of REST in neurons. May be involved in ciliogenesiss; however, reports are conflicting: PubMed:21985783 reports that Hap1 is required for ciliogenesis in primary cortical neurons and proposes that HTT interacts with PCM1 through HAP1; PubMed:23532844 reports that mice with disrupted Hap1 display normal cilium formation and function. Involved in regulation of exocytosis. Isoform A but not isoform B seems to be involved in formation of cytoplasmic inclusion bodies (STBs). In case of anomalous expression of TBP, can sequester a subset of TBP into STBs; sequestration is enhanced by an expanded polyglutamine repeat within TBP.</text>
</comment>
<comment type="subunit">
    <text evidence="3 8 9 11 12">Self-associates. Interacts with HTT/huntingtin; enhanced by an expanded polyglutamine repeat within HTT. Isoform A interacts with DCTN1; decreased in presence of HTT with expanded polyglutamine repeat; decreased by phosphorylation of Hap1 isoform A at Thr-598. Isoform A interacts with KLC2; decreased by phosphorylation of Hap1 isoform A at Thr-598. Isoform A interacts with ITPR1 and APP. Isoform A interacts with AR; decreased by an expanded polyglutamine repeat within AR. Isoform A interacts with YWHAZ; enhanced by phosphorylation of Hap1 isoform A at Thr-598. Isoform A interacts with BDNF and SORT1; probably forming a complex involved in proBDNF trafficking, degradation and processing. Interacts with TBP, AHI1, HGS and KALRN. Interacts with KIF5A, KIF5B, KIF5C and GABRB3; indicative for an HAP1:KIF5 complex transporting a GABA(A) receptor as cargo. Interacts with ATXN3; in STBs. Interacts with NTRK2; HAP1 stabilizes association of NTRK2 with SORT1 preventing NTRK2 degradation. Interacts with CFAP263.</text>
</comment>
<comment type="interaction">
    <interactant intactId="EBI-473704">
        <id>O35668</id>
    </interactant>
    <interactant intactId="EBI-4280729">
        <id>Q8K3E5</id>
        <label>Ahi1</label>
    </interactant>
    <organismsDiffer>false</organismsDiffer>
    <experiments>3</experiments>
</comment>
<comment type="interaction">
    <interactant intactId="EBI-473719">
        <id>O35668-2</id>
    </interactant>
    <interactant intactId="EBI-978371">
        <id>B2GV74</id>
        <label>Klc2</label>
    </interactant>
    <organismsDiffer>true</organismsDiffer>
    <experiments>3</experiments>
</comment>
<comment type="subcellular location">
    <subcellularLocation>
        <location evidence="2">Cytoplasm</location>
    </subcellularLocation>
    <subcellularLocation>
        <location evidence="2">Presynapse</location>
    </subcellularLocation>
    <subcellularLocation>
        <location evidence="2">Cytoplasm</location>
        <location evidence="2">Cytoskeleton</location>
    </subcellularLocation>
    <subcellularLocation>
        <location evidence="2">Cell projection</location>
        <location evidence="2">Dendritic spine</location>
    </subcellularLocation>
    <subcellularLocation>
        <location evidence="2">Cell projection</location>
        <location evidence="2">Dendrite</location>
    </subcellularLocation>
    <subcellularLocation>
        <location evidence="2">Cell projection</location>
        <location evidence="2">Axon</location>
    </subcellularLocation>
    <subcellularLocation>
        <location evidence="2">Lysosome</location>
    </subcellularLocation>
    <subcellularLocation>
        <location evidence="2">Endoplasmic reticulum</location>
    </subcellularLocation>
    <subcellularLocation>
        <location evidence="2">Mitochondrion</location>
    </subcellularLocation>
    <subcellularLocation>
        <location evidence="2">Nucleus</location>
    </subcellularLocation>
    <subcellularLocation>
        <location evidence="15">Cytoplasmic vesicle</location>
        <location evidence="15">Autophagosome</location>
    </subcellularLocation>
    <subcellularLocation>
        <location evidence="2">Early endosome</location>
    </subcellularLocation>
    <subcellularLocation>
        <location evidence="2">Cell projection</location>
        <location evidence="2">Growth cone</location>
    </subcellularLocation>
    <text evidence="2">Localizes to large nonmembrane-bound cytoplasmic bodies found in various types of neurons, called stigmoid bodies (STBs); STB formation is regulated by the ratio of isoform A to isoform B. In the nucleus localizes to nuclear rods.</text>
</comment>
<comment type="subcellular location">
    <molecule>Isoform B</molecule>
    <subcellularLocation>
        <location evidence="2">Cytoplasm</location>
    </subcellularLocation>
    <text evidence="2">In NGF-stimulated PC2 cells isoform A can move anterogradely fom neurite cell body to neurite terminal and is localized to growth cone tips whereas isoform B stays in the cell body.</text>
</comment>
<comment type="subcellular location">
    <molecule>Isoform A</molecule>
    <subcellularLocation>
        <location evidence="2">Cell projection</location>
        <location evidence="2">Growth cone</location>
    </subcellularLocation>
    <subcellularLocation>
        <location evidence="2">Cell projection</location>
        <location evidence="2">Neuron projection</location>
    </subcellularLocation>
    <subcellularLocation>
        <location evidence="2">Cytoplasmic vesicle</location>
        <location evidence="2">Secretory vesicle</location>
        <location evidence="2">Synaptic vesicle</location>
    </subcellularLocation>
    <subcellularLocation>
        <location evidence="2">Presynapse</location>
    </subcellularLocation>
    <text evidence="2">In NGF-stimulated PC2 cells isoform A can move anterogradely fom neurite cell body to neurite terminal and is localized to growth cone tips whereas isoform B stays in the cell body. Localization to neuronal processes and neurite tips is decreased by YWHAZ.</text>
</comment>
<comment type="alternative products">
    <event type="alternative splicing"/>
    <isoform>
        <id>O35668-1</id>
        <name>B</name>
        <name>Long</name>
        <sequence type="displayed"/>
    </isoform>
    <isoform>
        <id>O35668-2</id>
        <name>A</name>
        <name>Short</name>
        <sequence type="described" ref="VSP_004279"/>
    </isoform>
</comment>
<comment type="PTM">
    <text evidence="2">Isoform A is phosphorylated on Thr-598.</text>
</comment>
<comment type="disruption phenotype">
    <text evidence="6">Depressed postnatal feeding behavior leading to premature death latest at P9. Degeneration in hypothalamic regions that control feeding behavior.</text>
</comment>
<accession>O35668</accession>
<accession>O35636</accession>
<evidence type="ECO:0000250" key="1"/>
<evidence type="ECO:0000250" key="2">
    <source>
        <dbReference type="UniProtKB" id="P54256"/>
    </source>
</evidence>
<evidence type="ECO:0000250" key="3">
    <source>
        <dbReference type="UniProtKB" id="P54257"/>
    </source>
</evidence>
<evidence type="ECO:0000255" key="4"/>
<evidence type="ECO:0000256" key="5">
    <source>
        <dbReference type="SAM" id="MobiDB-lite"/>
    </source>
</evidence>
<evidence type="ECO:0000269" key="6">
    <source>
    </source>
</evidence>
<evidence type="ECO:0000269" key="7">
    <source>
    </source>
</evidence>
<evidence type="ECO:0000269" key="8">
    <source>
    </source>
</evidence>
<evidence type="ECO:0000269" key="9">
    <source>
    </source>
</evidence>
<evidence type="ECO:0000269" key="10">
    <source>
    </source>
</evidence>
<evidence type="ECO:0000269" key="11">
    <source>
    </source>
</evidence>
<evidence type="ECO:0000269" key="12">
    <source>
    </source>
</evidence>
<evidence type="ECO:0000269" key="13">
    <source>
    </source>
</evidence>
<evidence type="ECO:0000269" key="14">
    <source>
    </source>
</evidence>
<evidence type="ECO:0000269" key="15">
    <source>
    </source>
</evidence>
<evidence type="ECO:0000303" key="16">
    <source>
    </source>
</evidence>
<gene>
    <name type="primary">Hap1</name>
</gene>
<name>HAP1_MOUSE</name>
<organism>
    <name type="scientific">Mus musculus</name>
    <name type="common">Mouse</name>
    <dbReference type="NCBI Taxonomy" id="10090"/>
    <lineage>
        <taxon>Eukaryota</taxon>
        <taxon>Metazoa</taxon>
        <taxon>Chordata</taxon>
        <taxon>Craniata</taxon>
        <taxon>Vertebrata</taxon>
        <taxon>Euteleostomi</taxon>
        <taxon>Mammalia</taxon>
        <taxon>Eutheria</taxon>
        <taxon>Euarchontoglires</taxon>
        <taxon>Glires</taxon>
        <taxon>Rodentia</taxon>
        <taxon>Myomorpha</taxon>
        <taxon>Muroidea</taxon>
        <taxon>Muridae</taxon>
        <taxon>Murinae</taxon>
        <taxon>Mus</taxon>
        <taxon>Mus</taxon>
    </lineage>
</organism>